<keyword id="KW-0150">Chloroplast</keyword>
<keyword id="KW-0472">Membrane</keyword>
<keyword id="KW-0602">Photosynthesis</keyword>
<keyword id="KW-0604">Photosystem II</keyword>
<keyword id="KW-0934">Plastid</keyword>
<keyword id="KW-1185">Reference proteome</keyword>
<keyword id="KW-0793">Thylakoid</keyword>
<keyword id="KW-0812">Transmembrane</keyword>
<keyword id="KW-1133">Transmembrane helix</keyword>
<organism>
    <name type="scientific">Zea mays</name>
    <name type="common">Maize</name>
    <dbReference type="NCBI Taxonomy" id="4577"/>
    <lineage>
        <taxon>Eukaryota</taxon>
        <taxon>Viridiplantae</taxon>
        <taxon>Streptophyta</taxon>
        <taxon>Embryophyta</taxon>
        <taxon>Tracheophyta</taxon>
        <taxon>Spermatophyta</taxon>
        <taxon>Magnoliopsida</taxon>
        <taxon>Liliopsida</taxon>
        <taxon>Poales</taxon>
        <taxon>Poaceae</taxon>
        <taxon>PACMAD clade</taxon>
        <taxon>Panicoideae</taxon>
        <taxon>Andropogonodae</taxon>
        <taxon>Andropogoneae</taxon>
        <taxon>Tripsacinae</taxon>
        <taxon>Zea</taxon>
    </lineage>
</organism>
<reference key="1">
    <citation type="journal article" date="1987" name="Curr. Genet.">
        <title>The maize plastid psbB-psbF-petB-petD gene cluster: spliced and unspliced petB and petD RNAs encode alternative products.</title>
        <authorList>
            <person name="Rock C.D."/>
            <person name="Barkan A."/>
            <person name="Taylor W.C."/>
        </authorList>
    </citation>
    <scope>NUCLEOTIDE SEQUENCE [LARGE SCALE GENOMIC DNA]</scope>
    <source>
        <strain>cv. B73</strain>
    </source>
</reference>
<reference key="2">
    <citation type="journal article" date="1995" name="J. Mol. Biol.">
        <title>Complete sequence of the maize chloroplast genome: gene content, hotspots of divergence and fine tuning of genetic information by transcript editing.</title>
        <authorList>
            <person name="Maier R.M."/>
            <person name="Neckermann K."/>
            <person name="Igloi G.L."/>
            <person name="Koessel H."/>
        </authorList>
    </citation>
    <scope>NUCLEOTIDE SEQUENCE [LARGE SCALE GENOMIC DNA]</scope>
    <source>
        <strain>cv. B73</strain>
    </source>
</reference>
<evidence type="ECO:0000255" key="1">
    <source>
        <dbReference type="HAMAP-Rule" id="MF_00808"/>
    </source>
</evidence>
<evidence type="ECO:0000305" key="2"/>
<sequence length="33" mass="3818">MEALVYTFLLVSTLGIIFFAIFFREPPKVPTKK</sequence>
<dbReference type="EMBL" id="X05422">
    <property type="status" value="NOT_ANNOTATED_CDS"/>
    <property type="molecule type" value="Genomic_DNA"/>
</dbReference>
<dbReference type="EMBL" id="X86563">
    <property type="protein sequence ID" value="CAA60312.1"/>
    <property type="molecule type" value="Genomic_DNA"/>
</dbReference>
<dbReference type="PIR" id="S58578">
    <property type="entry name" value="S58578"/>
</dbReference>
<dbReference type="RefSeq" id="NP_043050.1">
    <property type="nucleotide sequence ID" value="NC_001666.2"/>
</dbReference>
<dbReference type="SMR" id="P69671"/>
<dbReference type="FunCoup" id="P69671">
    <property type="interactions" value="54"/>
</dbReference>
<dbReference type="STRING" id="4577.P69671"/>
<dbReference type="GeneID" id="1466364"/>
<dbReference type="KEGG" id="zma:1466364"/>
<dbReference type="MaizeGDB" id="85519"/>
<dbReference type="InParanoid" id="P69671"/>
<dbReference type="OrthoDB" id="1558483at2759"/>
<dbReference type="Proteomes" id="UP000007305">
    <property type="component" value="Chloroplast"/>
</dbReference>
<dbReference type="GO" id="GO:0009535">
    <property type="term" value="C:chloroplast thylakoid membrane"/>
    <property type="evidence" value="ECO:0007669"/>
    <property type="project" value="UniProtKB-SubCell"/>
</dbReference>
<dbReference type="GO" id="GO:0009539">
    <property type="term" value="C:photosystem II reaction center"/>
    <property type="evidence" value="ECO:0007669"/>
    <property type="project" value="InterPro"/>
</dbReference>
<dbReference type="GO" id="GO:0015979">
    <property type="term" value="P:photosynthesis"/>
    <property type="evidence" value="ECO:0007669"/>
    <property type="project" value="UniProtKB-UniRule"/>
</dbReference>
<dbReference type="HAMAP" id="MF_00808">
    <property type="entry name" value="PSII_PsbT"/>
    <property type="match status" value="1"/>
</dbReference>
<dbReference type="InterPro" id="IPR001743">
    <property type="entry name" value="PSII_PsbT"/>
</dbReference>
<dbReference type="InterPro" id="IPR037268">
    <property type="entry name" value="PSII_PsbT_sf"/>
</dbReference>
<dbReference type="PANTHER" id="PTHR36411">
    <property type="match status" value="1"/>
</dbReference>
<dbReference type="PANTHER" id="PTHR36411:SF2">
    <property type="entry name" value="PHOTOSYSTEM II REACTION CENTER PROTEIN T"/>
    <property type="match status" value="1"/>
</dbReference>
<dbReference type="Pfam" id="PF01405">
    <property type="entry name" value="PsbT"/>
    <property type="match status" value="1"/>
</dbReference>
<dbReference type="SUPFAM" id="SSF161029">
    <property type="entry name" value="Photosystem II reaction center protein T, PsbT"/>
    <property type="match status" value="1"/>
</dbReference>
<accession>P69671</accession>
<accession>P37257</accession>
<feature type="chain" id="PRO_0000217950" description="Photosystem II reaction center protein T">
    <location>
        <begin position="1"/>
        <end position="33"/>
    </location>
</feature>
<feature type="transmembrane region" description="Helical" evidence="1">
    <location>
        <begin position="3"/>
        <end position="23"/>
    </location>
</feature>
<proteinExistence type="inferred from homology"/>
<gene>
    <name evidence="1" type="primary">psbT</name>
    <name type="synonym">ycf8</name>
</gene>
<geneLocation type="chloroplast"/>
<protein>
    <recommendedName>
        <fullName evidence="1">Photosystem II reaction center protein T</fullName>
        <shortName evidence="1">PSII-T</shortName>
    </recommendedName>
</protein>
<name>PSBT_MAIZE</name>
<comment type="function">
    <text evidence="1">Found at the monomer-monomer interface of the photosystem II (PS II) dimer, plays a role in assembly and dimerization of PSII. PSII is a light-driven water plastoquinone oxidoreductase, using light energy to abstract electrons from H(2)O, generating a proton gradient subsequently used for ATP formation.</text>
</comment>
<comment type="subunit">
    <text evidence="1">PSII is composed of 1 copy each of membrane proteins PsbA, PsbB, PsbC, PsbD, PsbE, PsbF, PsbH, PsbI, PsbJ, PsbK, PsbL, PsbM, PsbT, PsbY, PsbZ, Psb30/Ycf12, at least 3 peripheral proteins of the oxygen-evolving complex and a large number of cofactors. It forms dimeric complexes.</text>
</comment>
<comment type="subcellular location">
    <subcellularLocation>
        <location evidence="1">Plastid</location>
        <location evidence="1">Chloroplast thylakoid membrane</location>
        <topology evidence="1">Single-pass membrane protein</topology>
    </subcellularLocation>
</comment>
<comment type="similarity">
    <text evidence="1 2">Belongs to the PsbT family.</text>
</comment>